<proteinExistence type="inferred from homology"/>
<dbReference type="EC" id="2.7.2.8" evidence="1"/>
<dbReference type="EMBL" id="CP000927">
    <property type="protein sequence ID" value="ABZ73678.1"/>
    <property type="molecule type" value="Genomic_DNA"/>
</dbReference>
<dbReference type="SMR" id="B0T130"/>
<dbReference type="STRING" id="366602.Caul_4558"/>
<dbReference type="KEGG" id="cak:Caul_4558"/>
<dbReference type="eggNOG" id="COG0548">
    <property type="taxonomic scope" value="Bacteria"/>
</dbReference>
<dbReference type="HOGENOM" id="CLU_053680_0_0_5"/>
<dbReference type="OrthoDB" id="9803155at2"/>
<dbReference type="UniPathway" id="UPA00068">
    <property type="reaction ID" value="UER00107"/>
</dbReference>
<dbReference type="GO" id="GO:0005737">
    <property type="term" value="C:cytoplasm"/>
    <property type="evidence" value="ECO:0007669"/>
    <property type="project" value="UniProtKB-SubCell"/>
</dbReference>
<dbReference type="GO" id="GO:0003991">
    <property type="term" value="F:acetylglutamate kinase activity"/>
    <property type="evidence" value="ECO:0007669"/>
    <property type="project" value="UniProtKB-UniRule"/>
</dbReference>
<dbReference type="GO" id="GO:0005524">
    <property type="term" value="F:ATP binding"/>
    <property type="evidence" value="ECO:0007669"/>
    <property type="project" value="UniProtKB-UniRule"/>
</dbReference>
<dbReference type="GO" id="GO:0042450">
    <property type="term" value="P:arginine biosynthetic process via ornithine"/>
    <property type="evidence" value="ECO:0007669"/>
    <property type="project" value="UniProtKB-UniRule"/>
</dbReference>
<dbReference type="GO" id="GO:0006526">
    <property type="term" value="P:L-arginine biosynthetic process"/>
    <property type="evidence" value="ECO:0007669"/>
    <property type="project" value="UniProtKB-UniPathway"/>
</dbReference>
<dbReference type="CDD" id="cd04250">
    <property type="entry name" value="AAK_NAGK-C"/>
    <property type="match status" value="1"/>
</dbReference>
<dbReference type="FunFam" id="3.40.1160.10:FF:000004">
    <property type="entry name" value="Acetylglutamate kinase"/>
    <property type="match status" value="1"/>
</dbReference>
<dbReference type="Gene3D" id="3.40.1160.10">
    <property type="entry name" value="Acetylglutamate kinase-like"/>
    <property type="match status" value="1"/>
</dbReference>
<dbReference type="HAMAP" id="MF_00082">
    <property type="entry name" value="ArgB"/>
    <property type="match status" value="1"/>
</dbReference>
<dbReference type="InterPro" id="IPR036393">
    <property type="entry name" value="AceGlu_kinase-like_sf"/>
</dbReference>
<dbReference type="InterPro" id="IPR004662">
    <property type="entry name" value="AcgluKinase_fam"/>
</dbReference>
<dbReference type="InterPro" id="IPR037528">
    <property type="entry name" value="ArgB"/>
</dbReference>
<dbReference type="InterPro" id="IPR001048">
    <property type="entry name" value="Asp/Glu/Uridylate_kinase"/>
</dbReference>
<dbReference type="InterPro" id="IPR001057">
    <property type="entry name" value="Glu/AcGlu_kinase"/>
</dbReference>
<dbReference type="InterPro" id="IPR041727">
    <property type="entry name" value="NAGK-C"/>
</dbReference>
<dbReference type="NCBIfam" id="TIGR00761">
    <property type="entry name" value="argB"/>
    <property type="match status" value="1"/>
</dbReference>
<dbReference type="PANTHER" id="PTHR23342">
    <property type="entry name" value="N-ACETYLGLUTAMATE SYNTHASE"/>
    <property type="match status" value="1"/>
</dbReference>
<dbReference type="PANTHER" id="PTHR23342:SF0">
    <property type="entry name" value="N-ACETYLGLUTAMATE SYNTHASE, MITOCHONDRIAL"/>
    <property type="match status" value="1"/>
</dbReference>
<dbReference type="Pfam" id="PF00696">
    <property type="entry name" value="AA_kinase"/>
    <property type="match status" value="1"/>
</dbReference>
<dbReference type="PIRSF" id="PIRSF000728">
    <property type="entry name" value="NAGK"/>
    <property type="match status" value="1"/>
</dbReference>
<dbReference type="PRINTS" id="PR00474">
    <property type="entry name" value="GLU5KINASE"/>
</dbReference>
<dbReference type="SUPFAM" id="SSF53633">
    <property type="entry name" value="Carbamate kinase-like"/>
    <property type="match status" value="1"/>
</dbReference>
<comment type="function">
    <text evidence="1">Catalyzes the ATP-dependent phosphorylation of N-acetyl-L-glutamate.</text>
</comment>
<comment type="catalytic activity">
    <reaction evidence="1">
        <text>N-acetyl-L-glutamate + ATP = N-acetyl-L-glutamyl 5-phosphate + ADP</text>
        <dbReference type="Rhea" id="RHEA:14629"/>
        <dbReference type="ChEBI" id="CHEBI:30616"/>
        <dbReference type="ChEBI" id="CHEBI:44337"/>
        <dbReference type="ChEBI" id="CHEBI:57936"/>
        <dbReference type="ChEBI" id="CHEBI:456216"/>
        <dbReference type="EC" id="2.7.2.8"/>
    </reaction>
</comment>
<comment type="pathway">
    <text evidence="1">Amino-acid biosynthesis; L-arginine biosynthesis; N(2)-acetyl-L-ornithine from L-glutamate: step 2/4.</text>
</comment>
<comment type="subcellular location">
    <subcellularLocation>
        <location evidence="1">Cytoplasm</location>
    </subcellularLocation>
</comment>
<comment type="similarity">
    <text evidence="1">Belongs to the acetylglutamate kinase family. ArgB subfamily.</text>
</comment>
<name>ARGB_CAUSK</name>
<sequence>MTDVAEEAGWATAKTLAEALPYIQIYDRETVVIKYGGHAMGQEQVAKLFAADAVLLKLLGVHPVVVHGGGPQISRMLDKAGVKSTFVDGLRVTDEATMEVAEMVLSGAINKEIANWITLAGAEADVRGVGLSGKDARMITAEKVTRTRKDPGSNIEQVVDLGFVGEPTKIDPHIIQALLTSETDYIPVIAPIGVSTEGQTFNINADTVAGALAGALKAKRMLMLTDIAGVLDADGNLIRAMTVAEARALIESGVASGGMIPKLENAIHAVENGVEAVVILDGRRPHAMLVELFSEHGAGTLISK</sequence>
<organism>
    <name type="scientific">Caulobacter sp. (strain K31)</name>
    <dbReference type="NCBI Taxonomy" id="366602"/>
    <lineage>
        <taxon>Bacteria</taxon>
        <taxon>Pseudomonadati</taxon>
        <taxon>Pseudomonadota</taxon>
        <taxon>Alphaproteobacteria</taxon>
        <taxon>Caulobacterales</taxon>
        <taxon>Caulobacteraceae</taxon>
        <taxon>Caulobacter</taxon>
    </lineage>
</organism>
<evidence type="ECO:0000255" key="1">
    <source>
        <dbReference type="HAMAP-Rule" id="MF_00082"/>
    </source>
</evidence>
<accession>B0T130</accession>
<reference key="1">
    <citation type="submission" date="2008-01" db="EMBL/GenBank/DDBJ databases">
        <title>Complete sequence of chromosome of Caulobacter sp. K31.</title>
        <authorList>
            <consortium name="US DOE Joint Genome Institute"/>
            <person name="Copeland A."/>
            <person name="Lucas S."/>
            <person name="Lapidus A."/>
            <person name="Barry K."/>
            <person name="Glavina del Rio T."/>
            <person name="Dalin E."/>
            <person name="Tice H."/>
            <person name="Pitluck S."/>
            <person name="Bruce D."/>
            <person name="Goodwin L."/>
            <person name="Thompson L.S."/>
            <person name="Brettin T."/>
            <person name="Detter J.C."/>
            <person name="Han C."/>
            <person name="Schmutz J."/>
            <person name="Larimer F."/>
            <person name="Land M."/>
            <person name="Hauser L."/>
            <person name="Kyrpides N."/>
            <person name="Kim E."/>
            <person name="Stephens C."/>
            <person name="Richardson P."/>
        </authorList>
    </citation>
    <scope>NUCLEOTIDE SEQUENCE [LARGE SCALE GENOMIC DNA]</scope>
    <source>
        <strain>K31</strain>
    </source>
</reference>
<protein>
    <recommendedName>
        <fullName evidence="1">Acetylglutamate kinase</fullName>
        <ecNumber evidence="1">2.7.2.8</ecNumber>
    </recommendedName>
    <alternativeName>
        <fullName evidence="1">N-acetyl-L-glutamate 5-phosphotransferase</fullName>
    </alternativeName>
    <alternativeName>
        <fullName evidence="1">NAG kinase</fullName>
        <shortName evidence="1">NAGK</shortName>
    </alternativeName>
</protein>
<gene>
    <name evidence="1" type="primary">argB</name>
    <name type="ordered locus">Caul_4558</name>
</gene>
<feature type="chain" id="PRO_1000075306" description="Acetylglutamate kinase">
    <location>
        <begin position="1"/>
        <end position="304"/>
    </location>
</feature>
<feature type="binding site" evidence="1">
    <location>
        <begin position="69"/>
        <end position="70"/>
    </location>
    <ligand>
        <name>substrate</name>
    </ligand>
</feature>
<feature type="binding site" evidence="1">
    <location>
        <position position="91"/>
    </location>
    <ligand>
        <name>substrate</name>
    </ligand>
</feature>
<feature type="binding site" evidence="1">
    <location>
        <position position="202"/>
    </location>
    <ligand>
        <name>substrate</name>
    </ligand>
</feature>
<feature type="site" description="Transition state stabilizer" evidence="1">
    <location>
        <position position="34"/>
    </location>
</feature>
<feature type="site" description="Transition state stabilizer" evidence="1">
    <location>
        <position position="262"/>
    </location>
</feature>
<keyword id="KW-0028">Amino-acid biosynthesis</keyword>
<keyword id="KW-0055">Arginine biosynthesis</keyword>
<keyword id="KW-0067">ATP-binding</keyword>
<keyword id="KW-0963">Cytoplasm</keyword>
<keyword id="KW-0418">Kinase</keyword>
<keyword id="KW-0547">Nucleotide-binding</keyword>
<keyword id="KW-0808">Transferase</keyword>